<name>RS3_BIFLS</name>
<feature type="chain" id="PRO_1000165478" description="Small ribosomal subunit protein uS3">
    <location>
        <begin position="1"/>
        <end position="267"/>
    </location>
</feature>
<feature type="domain" description="KH type-2" evidence="1">
    <location>
        <begin position="43"/>
        <end position="111"/>
    </location>
</feature>
<feature type="region of interest" description="Disordered" evidence="2">
    <location>
        <begin position="216"/>
        <end position="267"/>
    </location>
</feature>
<feature type="compositionally biased region" description="Low complexity" evidence="2">
    <location>
        <begin position="241"/>
        <end position="267"/>
    </location>
</feature>
<keyword id="KW-0687">Ribonucleoprotein</keyword>
<keyword id="KW-0689">Ribosomal protein</keyword>
<keyword id="KW-0694">RNA-binding</keyword>
<keyword id="KW-0699">rRNA-binding</keyword>
<proteinExistence type="inferred from homology"/>
<gene>
    <name evidence="1" type="primary">rpsC</name>
    <name type="ordered locus">Blon_2231</name>
    <name type="ordered locus">BLIJ_2304</name>
</gene>
<reference key="1">
    <citation type="journal article" date="2008" name="Proc. Natl. Acad. Sci. U.S.A.">
        <title>The genome sequence of Bifidobacterium longum subsp. infantis reveals adaptations for milk utilization within the infant microbiome.</title>
        <authorList>
            <person name="Sela D.A."/>
            <person name="Chapman J."/>
            <person name="Adeuya A."/>
            <person name="Kim J.H."/>
            <person name="Chen F."/>
            <person name="Whitehead T.R."/>
            <person name="Lapidus A."/>
            <person name="Rokhsar D.S."/>
            <person name="Lebrilla C.B."/>
            <person name="German J.B."/>
            <person name="Price N.P."/>
            <person name="Richardson P.M."/>
            <person name="Mills D.A."/>
        </authorList>
    </citation>
    <scope>NUCLEOTIDE SEQUENCE [LARGE SCALE GENOMIC DNA]</scope>
    <source>
        <strain>ATCC 15697 / DSM 20088 / JCM 1222 / NCTC 11817 / S12</strain>
    </source>
</reference>
<reference key="2">
    <citation type="journal article" date="2011" name="Nature">
        <title>Bifidobacteria can protect from enteropathogenic infection through production of acetate.</title>
        <authorList>
            <person name="Fukuda S."/>
            <person name="Toh H."/>
            <person name="Hase K."/>
            <person name="Oshima K."/>
            <person name="Nakanishi Y."/>
            <person name="Yoshimura K."/>
            <person name="Tobe T."/>
            <person name="Clarke J.M."/>
            <person name="Topping D.L."/>
            <person name="Suzuki T."/>
            <person name="Taylor T.D."/>
            <person name="Itoh K."/>
            <person name="Kikuchi J."/>
            <person name="Morita H."/>
            <person name="Hattori M."/>
            <person name="Ohno H."/>
        </authorList>
    </citation>
    <scope>NUCLEOTIDE SEQUENCE [LARGE SCALE GENOMIC DNA]</scope>
    <source>
        <strain>ATCC 15697 / DSM 20088 / JCM 1222 / NCTC 11817 / S12</strain>
    </source>
</reference>
<protein>
    <recommendedName>
        <fullName evidence="1">Small ribosomal subunit protein uS3</fullName>
    </recommendedName>
    <alternativeName>
        <fullName evidence="3">30S ribosomal protein S3</fullName>
    </alternativeName>
</protein>
<comment type="function">
    <text evidence="1">Binds the lower part of the 30S subunit head. Binds mRNA in the 70S ribosome, positioning it for translation.</text>
</comment>
<comment type="subunit">
    <text evidence="1">Part of the 30S ribosomal subunit. Forms a tight complex with proteins S10 and S14.</text>
</comment>
<comment type="similarity">
    <text evidence="1">Belongs to the universal ribosomal protein uS3 family.</text>
</comment>
<accession>B7GND4</accession>
<accession>E8MN78</accession>
<dbReference type="EMBL" id="CP001095">
    <property type="protein sequence ID" value="ACJ53290.1"/>
    <property type="molecule type" value="Genomic_DNA"/>
</dbReference>
<dbReference type="EMBL" id="AP010889">
    <property type="protein sequence ID" value="BAJ69881.1"/>
    <property type="molecule type" value="Genomic_DNA"/>
</dbReference>
<dbReference type="RefSeq" id="WP_012578471.1">
    <property type="nucleotide sequence ID" value="NC_011593.1"/>
</dbReference>
<dbReference type="SMR" id="B7GND4"/>
<dbReference type="KEGG" id="bln:Blon_2231"/>
<dbReference type="KEGG" id="blon:BLIJ_2304"/>
<dbReference type="PATRIC" id="fig|391904.8.peg.2306"/>
<dbReference type="HOGENOM" id="CLU_058591_0_2_11"/>
<dbReference type="Proteomes" id="UP000001360">
    <property type="component" value="Chromosome"/>
</dbReference>
<dbReference type="GO" id="GO:0022627">
    <property type="term" value="C:cytosolic small ribosomal subunit"/>
    <property type="evidence" value="ECO:0007669"/>
    <property type="project" value="TreeGrafter"/>
</dbReference>
<dbReference type="GO" id="GO:0003729">
    <property type="term" value="F:mRNA binding"/>
    <property type="evidence" value="ECO:0007669"/>
    <property type="project" value="UniProtKB-UniRule"/>
</dbReference>
<dbReference type="GO" id="GO:0019843">
    <property type="term" value="F:rRNA binding"/>
    <property type="evidence" value="ECO:0007669"/>
    <property type="project" value="UniProtKB-UniRule"/>
</dbReference>
<dbReference type="GO" id="GO:0003735">
    <property type="term" value="F:structural constituent of ribosome"/>
    <property type="evidence" value="ECO:0007669"/>
    <property type="project" value="InterPro"/>
</dbReference>
<dbReference type="GO" id="GO:0006412">
    <property type="term" value="P:translation"/>
    <property type="evidence" value="ECO:0007669"/>
    <property type="project" value="UniProtKB-UniRule"/>
</dbReference>
<dbReference type="CDD" id="cd02412">
    <property type="entry name" value="KH-II_30S_S3"/>
    <property type="match status" value="1"/>
</dbReference>
<dbReference type="FunFam" id="3.30.1140.32:FF:000002">
    <property type="entry name" value="30S ribosomal protein S3"/>
    <property type="match status" value="1"/>
</dbReference>
<dbReference type="FunFam" id="3.30.300.20:FF:000001">
    <property type="entry name" value="30S ribosomal protein S3"/>
    <property type="match status" value="1"/>
</dbReference>
<dbReference type="Gene3D" id="3.30.300.20">
    <property type="match status" value="1"/>
</dbReference>
<dbReference type="Gene3D" id="3.30.1140.32">
    <property type="entry name" value="Ribosomal protein S3, C-terminal domain"/>
    <property type="match status" value="1"/>
</dbReference>
<dbReference type="HAMAP" id="MF_01309_B">
    <property type="entry name" value="Ribosomal_uS3_B"/>
    <property type="match status" value="1"/>
</dbReference>
<dbReference type="InterPro" id="IPR004087">
    <property type="entry name" value="KH_dom"/>
</dbReference>
<dbReference type="InterPro" id="IPR015946">
    <property type="entry name" value="KH_dom-like_a/b"/>
</dbReference>
<dbReference type="InterPro" id="IPR004044">
    <property type="entry name" value="KH_dom_type_2"/>
</dbReference>
<dbReference type="InterPro" id="IPR009019">
    <property type="entry name" value="KH_sf_prok-type"/>
</dbReference>
<dbReference type="InterPro" id="IPR036419">
    <property type="entry name" value="Ribosomal_S3_C_sf"/>
</dbReference>
<dbReference type="InterPro" id="IPR005704">
    <property type="entry name" value="Ribosomal_uS3_bac-typ"/>
</dbReference>
<dbReference type="InterPro" id="IPR001351">
    <property type="entry name" value="Ribosomal_uS3_C"/>
</dbReference>
<dbReference type="InterPro" id="IPR018280">
    <property type="entry name" value="Ribosomal_uS3_CS"/>
</dbReference>
<dbReference type="NCBIfam" id="TIGR01009">
    <property type="entry name" value="rpsC_bact"/>
    <property type="match status" value="1"/>
</dbReference>
<dbReference type="PANTHER" id="PTHR11760">
    <property type="entry name" value="30S/40S RIBOSOMAL PROTEIN S3"/>
    <property type="match status" value="1"/>
</dbReference>
<dbReference type="PANTHER" id="PTHR11760:SF19">
    <property type="entry name" value="SMALL RIBOSOMAL SUBUNIT PROTEIN US3C"/>
    <property type="match status" value="1"/>
</dbReference>
<dbReference type="Pfam" id="PF07650">
    <property type="entry name" value="KH_2"/>
    <property type="match status" value="1"/>
</dbReference>
<dbReference type="Pfam" id="PF00189">
    <property type="entry name" value="Ribosomal_S3_C"/>
    <property type="match status" value="1"/>
</dbReference>
<dbReference type="SMART" id="SM00322">
    <property type="entry name" value="KH"/>
    <property type="match status" value="1"/>
</dbReference>
<dbReference type="SUPFAM" id="SSF54814">
    <property type="entry name" value="Prokaryotic type KH domain (KH-domain type II)"/>
    <property type="match status" value="1"/>
</dbReference>
<dbReference type="SUPFAM" id="SSF54821">
    <property type="entry name" value="Ribosomal protein S3 C-terminal domain"/>
    <property type="match status" value="1"/>
</dbReference>
<dbReference type="PROSITE" id="PS50823">
    <property type="entry name" value="KH_TYPE_2"/>
    <property type="match status" value="1"/>
</dbReference>
<dbReference type="PROSITE" id="PS00548">
    <property type="entry name" value="RIBOSOMAL_S3"/>
    <property type="match status" value="1"/>
</dbReference>
<sequence>MGQKINPFGYRLGITENHRSKWFSDSNKAGERYRDFVLEDDQIRKEMSKDLERAGVSRIVIERTRDRVRVDIHTARPGIVIGRRGAEAERVRAKLEKLTGKQVQLNIFEVKNAALDAQLVAQGIAEQLTNRVTFRRAMRKAQQDAMRAGAKGIRIKLSGRLGGAEISRSEFYREGRVPLQTLRALIDYGFFEAKTTYGRIGVKVWIYKGDMTESEFEEQQAQQNNRPGRRGGDRRPRRGNRSAAPQAAEAPKAEAPAEAAPAAETKE</sequence>
<evidence type="ECO:0000255" key="1">
    <source>
        <dbReference type="HAMAP-Rule" id="MF_01309"/>
    </source>
</evidence>
<evidence type="ECO:0000256" key="2">
    <source>
        <dbReference type="SAM" id="MobiDB-lite"/>
    </source>
</evidence>
<evidence type="ECO:0000305" key="3"/>
<organism>
    <name type="scientific">Bifidobacterium longum subsp. infantis (strain ATCC 15697 / DSM 20088 / JCM 1222 / NCTC 11817 / S12)</name>
    <dbReference type="NCBI Taxonomy" id="391904"/>
    <lineage>
        <taxon>Bacteria</taxon>
        <taxon>Bacillati</taxon>
        <taxon>Actinomycetota</taxon>
        <taxon>Actinomycetes</taxon>
        <taxon>Bifidobacteriales</taxon>
        <taxon>Bifidobacteriaceae</taxon>
        <taxon>Bifidobacterium</taxon>
    </lineage>
</organism>